<gene>
    <name evidence="1" type="primary">hspQ</name>
    <name type="ordered locus">YpsIP31758_2532</name>
</gene>
<accession>A7FJR9</accession>
<name>HSPQ_YERP3</name>
<sequence>MIASKFGIGQQVRHSLHGYLGVVIDIDPEYSLAPPEPDEVANNKTLRSSPWYHVVIEDDDGQPVHTYLAEAQLTYEDVDAHPEQPSLDELAASIRHQLQAPHLRN</sequence>
<evidence type="ECO:0000255" key="1">
    <source>
        <dbReference type="HAMAP-Rule" id="MF_01194"/>
    </source>
</evidence>
<evidence type="ECO:0000256" key="2">
    <source>
        <dbReference type="SAM" id="MobiDB-lite"/>
    </source>
</evidence>
<keyword id="KW-0963">Cytoplasm</keyword>
<keyword id="KW-0346">Stress response</keyword>
<reference key="1">
    <citation type="journal article" date="2007" name="PLoS Genet.">
        <title>The complete genome sequence of Yersinia pseudotuberculosis IP31758, the causative agent of Far East scarlet-like fever.</title>
        <authorList>
            <person name="Eppinger M."/>
            <person name="Rosovitz M.J."/>
            <person name="Fricke W.F."/>
            <person name="Rasko D.A."/>
            <person name="Kokorina G."/>
            <person name="Fayolle C."/>
            <person name="Lindler L.E."/>
            <person name="Carniel E."/>
            <person name="Ravel J."/>
        </authorList>
    </citation>
    <scope>NUCLEOTIDE SEQUENCE [LARGE SCALE GENOMIC DNA]</scope>
    <source>
        <strain>IP 31758</strain>
    </source>
</reference>
<comment type="function">
    <text evidence="1">Involved in the degradation of certain denaturated proteins, including DnaA, during heat shock stress.</text>
</comment>
<comment type="subcellular location">
    <subcellularLocation>
        <location evidence="1">Cytoplasm</location>
    </subcellularLocation>
</comment>
<comment type="similarity">
    <text evidence="1">Belongs to the HspQ family.</text>
</comment>
<dbReference type="EMBL" id="CP000720">
    <property type="protein sequence ID" value="ABS46122.1"/>
    <property type="molecule type" value="Genomic_DNA"/>
</dbReference>
<dbReference type="RefSeq" id="WP_002213054.1">
    <property type="nucleotide sequence ID" value="NC_009708.1"/>
</dbReference>
<dbReference type="SMR" id="A7FJR9"/>
<dbReference type="GeneID" id="57977119"/>
<dbReference type="KEGG" id="ypi:YpsIP31758_2532"/>
<dbReference type="HOGENOM" id="CLU_123865_1_0_6"/>
<dbReference type="Proteomes" id="UP000002412">
    <property type="component" value="Chromosome"/>
</dbReference>
<dbReference type="GO" id="GO:0005737">
    <property type="term" value="C:cytoplasm"/>
    <property type="evidence" value="ECO:0007669"/>
    <property type="project" value="UniProtKB-SubCell"/>
</dbReference>
<dbReference type="GO" id="GO:0003677">
    <property type="term" value="F:DNA binding"/>
    <property type="evidence" value="ECO:0007669"/>
    <property type="project" value="InterPro"/>
</dbReference>
<dbReference type="GO" id="GO:0009408">
    <property type="term" value="P:response to heat"/>
    <property type="evidence" value="ECO:0007669"/>
    <property type="project" value="UniProtKB-UniRule"/>
</dbReference>
<dbReference type="Gene3D" id="2.30.30.390">
    <property type="entry name" value="Hemimethylated DNA-binding domain"/>
    <property type="match status" value="1"/>
</dbReference>
<dbReference type="HAMAP" id="MF_01194">
    <property type="entry name" value="HspQ"/>
    <property type="match status" value="1"/>
</dbReference>
<dbReference type="InterPro" id="IPR011722">
    <property type="entry name" value="Hemimethylated_DNA-bd_dom"/>
</dbReference>
<dbReference type="InterPro" id="IPR036623">
    <property type="entry name" value="Hemimethylated_DNA-bd_sf"/>
</dbReference>
<dbReference type="InterPro" id="IPR022866">
    <property type="entry name" value="HspQ"/>
</dbReference>
<dbReference type="NCBIfam" id="NF010729">
    <property type="entry name" value="PRK14129.1"/>
    <property type="match status" value="1"/>
</dbReference>
<dbReference type="NCBIfam" id="TIGR02097">
    <property type="entry name" value="yccV"/>
    <property type="match status" value="1"/>
</dbReference>
<dbReference type="Pfam" id="PF08755">
    <property type="entry name" value="YccV-like"/>
    <property type="match status" value="1"/>
</dbReference>
<dbReference type="SMART" id="SM00992">
    <property type="entry name" value="YccV-like"/>
    <property type="match status" value="1"/>
</dbReference>
<dbReference type="SUPFAM" id="SSF141255">
    <property type="entry name" value="YccV-like"/>
    <property type="match status" value="1"/>
</dbReference>
<organism>
    <name type="scientific">Yersinia pseudotuberculosis serotype O:1b (strain IP 31758)</name>
    <dbReference type="NCBI Taxonomy" id="349747"/>
    <lineage>
        <taxon>Bacteria</taxon>
        <taxon>Pseudomonadati</taxon>
        <taxon>Pseudomonadota</taxon>
        <taxon>Gammaproteobacteria</taxon>
        <taxon>Enterobacterales</taxon>
        <taxon>Yersiniaceae</taxon>
        <taxon>Yersinia</taxon>
    </lineage>
</organism>
<protein>
    <recommendedName>
        <fullName evidence="1">Heat shock protein HspQ</fullName>
    </recommendedName>
</protein>
<proteinExistence type="inferred from homology"/>
<feature type="chain" id="PRO_1000065889" description="Heat shock protein HspQ">
    <location>
        <begin position="1"/>
        <end position="105"/>
    </location>
</feature>
<feature type="region of interest" description="Disordered" evidence="2">
    <location>
        <begin position="80"/>
        <end position="105"/>
    </location>
</feature>